<organism>
    <name type="scientific">Caprine arthritis encephalitis virus (strain 63)</name>
    <name type="common">CAEV-63</name>
    <dbReference type="NCBI Taxonomy" id="11662"/>
    <lineage>
        <taxon>Viruses</taxon>
        <taxon>Riboviria</taxon>
        <taxon>Pararnavirae</taxon>
        <taxon>Artverviricota</taxon>
        <taxon>Revtraviricetes</taxon>
        <taxon>Ortervirales</taxon>
        <taxon>Retroviridae</taxon>
        <taxon>Orthoretrovirinae</taxon>
        <taxon>Lentivirus</taxon>
        <taxon>Caprine arthritis encephalitis virus</taxon>
    </lineage>
</organism>
<evidence type="ECO:0000250" key="1"/>
<evidence type="ECO:0000255" key="2"/>
<evidence type="ECO:0000305" key="3"/>
<sequence>MSERLPQRREVHPEERVRNIWERERDTWQWTSIRVPEEILQRWLAMLRSGRNRNKVYREMQKWMSIHPKAPVIRPCGCRLCNPGWET</sequence>
<proteinExistence type="inferred from homology"/>
<feature type="chain" id="PRO_0000085486" description="Probable Vpr-like protein">
    <location>
        <begin position="1"/>
        <end position="87"/>
    </location>
</feature>
<feature type="short sequence motif" description="Nuclear export signal" evidence="2">
    <location>
        <begin position="40"/>
        <end position="47"/>
    </location>
</feature>
<feature type="short sequence motif" description="Nuclear localization signal" evidence="2">
    <location>
        <begin position="48"/>
        <end position="55"/>
    </location>
</feature>
<accession>P21125</accession>
<name>VPRL_CAEVG</name>
<dbReference type="EMBL" id="M34093">
    <property type="protein sequence ID" value="AAA42891.1"/>
    <property type="molecule type" value="Genomic_RNA"/>
</dbReference>
<dbReference type="SMR" id="P21125"/>
<dbReference type="GO" id="GO:0042025">
    <property type="term" value="C:host cell nucleus"/>
    <property type="evidence" value="ECO:0007669"/>
    <property type="project" value="UniProtKB-SubCell"/>
</dbReference>
<dbReference type="GO" id="GO:0044423">
    <property type="term" value="C:virion component"/>
    <property type="evidence" value="ECO:0007669"/>
    <property type="project" value="UniProtKB-KW"/>
</dbReference>
<dbReference type="InterPro" id="IPR004247">
    <property type="entry name" value="Lentiviral_Vpr-like"/>
</dbReference>
<dbReference type="Pfam" id="PF02998">
    <property type="entry name" value="Lentiviral_Tat"/>
    <property type="match status" value="1"/>
</dbReference>
<organismHost>
    <name type="scientific">Capra hircus</name>
    <name type="common">Goat</name>
    <dbReference type="NCBI Taxonomy" id="9925"/>
</organismHost>
<gene>
    <name type="primary">tat</name>
</gene>
<protein>
    <recommendedName>
        <fullName>Probable Vpr-like protein</fullName>
    </recommendedName>
    <alternativeName>
        <fullName>Protein S</fullName>
    </alternativeName>
    <alternativeName>
        <fullName>Protein Tat</fullName>
    </alternativeName>
</protein>
<comment type="function">
    <text evidence="1">Seems to function as a Vpr-like protein, since it mediates host cell cycle arrest in G2 phase. Cell cycle arrest creates a favorable environment for maximizing viral expression and production (By similarity).</text>
</comment>
<comment type="subcellular location">
    <subcellularLocation>
        <location evidence="3">Virion</location>
    </subcellularLocation>
    <subcellularLocation>
        <location evidence="1">Host nucleus</location>
    </subcellularLocation>
</comment>
<comment type="caution">
    <text evidence="3">Was first thought to be the equivalent of lentiviral Tat protein, but it does not induce any transactivation of viral LTR promoter, or if any, at very low rate. The LTR promoter of this virus has a high basal activity and does apparently not need transactivation by a Tat-like protein.</text>
</comment>
<reference key="1">
    <citation type="journal article" date="1991" name="Virology">
        <title>Genetic structure of the pol-env region of the caprine arthritis-encephalitis lentivirus genome.</title>
        <authorList>
            <person name="Jackson M.K."/>
            <person name="Knowles D.P."/>
            <person name="Stem T.A."/>
            <person name="Harwood W.G."/>
            <person name="Robinson M.M."/>
            <person name="Cheevers W.P."/>
        </authorList>
    </citation>
    <scope>NUCLEOTIDE SEQUENCE [GENOMIC RNA]</scope>
</reference>
<keyword id="KW-0131">Cell cycle</keyword>
<keyword id="KW-1048">Host nucleus</keyword>
<keyword id="KW-0946">Virion</keyword>